<organism>
    <name type="scientific">Mesomycoplasma hyopneumoniae (strain 232)</name>
    <name type="common">Mycoplasma hyopneumoniae</name>
    <dbReference type="NCBI Taxonomy" id="295358"/>
    <lineage>
        <taxon>Bacteria</taxon>
        <taxon>Bacillati</taxon>
        <taxon>Mycoplasmatota</taxon>
        <taxon>Mycoplasmoidales</taxon>
        <taxon>Metamycoplasmataceae</taxon>
        <taxon>Mesomycoplasma</taxon>
    </lineage>
</organism>
<feature type="chain" id="PRO_0000308862" description="DNA-directed RNA polymerase subunit beta'">
    <location>
        <begin position="1"/>
        <end position="1412"/>
    </location>
</feature>
<feature type="binding site" evidence="1">
    <location>
        <position position="543"/>
    </location>
    <ligand>
        <name>Mg(2+)</name>
        <dbReference type="ChEBI" id="CHEBI:18420"/>
    </ligand>
</feature>
<feature type="binding site" evidence="1">
    <location>
        <position position="545"/>
    </location>
    <ligand>
        <name>Mg(2+)</name>
        <dbReference type="ChEBI" id="CHEBI:18420"/>
    </ligand>
</feature>
<feature type="binding site" evidence="1">
    <location>
        <position position="547"/>
    </location>
    <ligand>
        <name>Mg(2+)</name>
        <dbReference type="ChEBI" id="CHEBI:18420"/>
    </ligand>
</feature>
<feature type="binding site" evidence="1">
    <location>
        <position position="1017"/>
    </location>
    <ligand>
        <name>Zn(2+)</name>
        <dbReference type="ChEBI" id="CHEBI:29105"/>
    </ligand>
</feature>
<feature type="binding site" evidence="1">
    <location>
        <position position="1092"/>
    </location>
    <ligand>
        <name>Zn(2+)</name>
        <dbReference type="ChEBI" id="CHEBI:29105"/>
    </ligand>
</feature>
<feature type="binding site" evidence="1">
    <location>
        <position position="1099"/>
    </location>
    <ligand>
        <name>Zn(2+)</name>
        <dbReference type="ChEBI" id="CHEBI:29105"/>
    </ligand>
</feature>
<feature type="binding site" evidence="1">
    <location>
        <position position="1102"/>
    </location>
    <ligand>
        <name>Zn(2+)</name>
        <dbReference type="ChEBI" id="CHEBI:29105"/>
    </ligand>
</feature>
<protein>
    <recommendedName>
        <fullName evidence="1">DNA-directed RNA polymerase subunit beta'</fullName>
        <shortName evidence="1">RNAP subunit beta'</shortName>
        <ecNumber evidence="1">2.7.7.6</ecNumber>
    </recommendedName>
    <alternativeName>
        <fullName evidence="1">RNA polymerase subunit beta'</fullName>
    </alternativeName>
    <alternativeName>
        <fullName evidence="1">Transcriptase subunit beta'</fullName>
    </alternativeName>
</protein>
<dbReference type="EC" id="2.7.7.6" evidence="1"/>
<dbReference type="EMBL" id="AE017332">
    <property type="protein sequence ID" value="AAV28002.1"/>
    <property type="molecule type" value="Genomic_DNA"/>
</dbReference>
<dbReference type="RefSeq" id="WP_011206466.1">
    <property type="nucleotide sequence ID" value="NC_006360.1"/>
</dbReference>
<dbReference type="SMR" id="Q5ZZS2"/>
<dbReference type="KEGG" id="mhy:mhp635"/>
<dbReference type="eggNOG" id="COG0086">
    <property type="taxonomic scope" value="Bacteria"/>
</dbReference>
<dbReference type="HOGENOM" id="CLU_000524_3_1_14"/>
<dbReference type="PhylomeDB" id="Q5ZZS2"/>
<dbReference type="Proteomes" id="UP000006822">
    <property type="component" value="Chromosome"/>
</dbReference>
<dbReference type="GO" id="GO:0000428">
    <property type="term" value="C:DNA-directed RNA polymerase complex"/>
    <property type="evidence" value="ECO:0007669"/>
    <property type="project" value="UniProtKB-KW"/>
</dbReference>
<dbReference type="GO" id="GO:0003677">
    <property type="term" value="F:DNA binding"/>
    <property type="evidence" value="ECO:0007669"/>
    <property type="project" value="UniProtKB-UniRule"/>
</dbReference>
<dbReference type="GO" id="GO:0003899">
    <property type="term" value="F:DNA-directed RNA polymerase activity"/>
    <property type="evidence" value="ECO:0007669"/>
    <property type="project" value="UniProtKB-UniRule"/>
</dbReference>
<dbReference type="GO" id="GO:0000287">
    <property type="term" value="F:magnesium ion binding"/>
    <property type="evidence" value="ECO:0007669"/>
    <property type="project" value="UniProtKB-UniRule"/>
</dbReference>
<dbReference type="GO" id="GO:0008270">
    <property type="term" value="F:zinc ion binding"/>
    <property type="evidence" value="ECO:0007669"/>
    <property type="project" value="UniProtKB-UniRule"/>
</dbReference>
<dbReference type="GO" id="GO:0006351">
    <property type="term" value="P:DNA-templated transcription"/>
    <property type="evidence" value="ECO:0007669"/>
    <property type="project" value="UniProtKB-UniRule"/>
</dbReference>
<dbReference type="CDD" id="cd02655">
    <property type="entry name" value="RNAP_beta'_C"/>
    <property type="match status" value="1"/>
</dbReference>
<dbReference type="Gene3D" id="1.10.132.30">
    <property type="match status" value="1"/>
</dbReference>
<dbReference type="Gene3D" id="1.10.150.390">
    <property type="match status" value="1"/>
</dbReference>
<dbReference type="Gene3D" id="1.10.1790.20">
    <property type="match status" value="1"/>
</dbReference>
<dbReference type="Gene3D" id="1.10.40.90">
    <property type="match status" value="1"/>
</dbReference>
<dbReference type="Gene3D" id="2.40.40.20">
    <property type="match status" value="1"/>
</dbReference>
<dbReference type="Gene3D" id="2.40.50.100">
    <property type="match status" value="1"/>
</dbReference>
<dbReference type="Gene3D" id="4.10.860.120">
    <property type="entry name" value="RNA polymerase II, clamp domain"/>
    <property type="match status" value="1"/>
</dbReference>
<dbReference type="Gene3D" id="1.10.274.100">
    <property type="entry name" value="RNA polymerase Rpb1, domain 3"/>
    <property type="match status" value="2"/>
</dbReference>
<dbReference type="HAMAP" id="MF_01322">
    <property type="entry name" value="RNApol_bact_RpoC"/>
    <property type="match status" value="1"/>
</dbReference>
<dbReference type="InterPro" id="IPR045867">
    <property type="entry name" value="DNA-dir_RpoC_beta_prime"/>
</dbReference>
<dbReference type="InterPro" id="IPR012754">
    <property type="entry name" value="DNA-dir_RpoC_beta_prime_bact"/>
</dbReference>
<dbReference type="InterPro" id="IPR000722">
    <property type="entry name" value="RNA_pol_asu"/>
</dbReference>
<dbReference type="InterPro" id="IPR006592">
    <property type="entry name" value="RNA_pol_N"/>
</dbReference>
<dbReference type="InterPro" id="IPR007080">
    <property type="entry name" value="RNA_pol_Rpb1_1"/>
</dbReference>
<dbReference type="InterPro" id="IPR007066">
    <property type="entry name" value="RNA_pol_Rpb1_3"/>
</dbReference>
<dbReference type="InterPro" id="IPR042102">
    <property type="entry name" value="RNA_pol_Rpb1_3_sf"/>
</dbReference>
<dbReference type="InterPro" id="IPR007083">
    <property type="entry name" value="RNA_pol_Rpb1_4"/>
</dbReference>
<dbReference type="InterPro" id="IPR007081">
    <property type="entry name" value="RNA_pol_Rpb1_5"/>
</dbReference>
<dbReference type="InterPro" id="IPR044893">
    <property type="entry name" value="RNA_pol_Rpb1_clamp_domain"/>
</dbReference>
<dbReference type="InterPro" id="IPR038120">
    <property type="entry name" value="Rpb1_funnel_sf"/>
</dbReference>
<dbReference type="NCBIfam" id="TIGR02386">
    <property type="entry name" value="rpoC_TIGR"/>
    <property type="match status" value="1"/>
</dbReference>
<dbReference type="PANTHER" id="PTHR19376">
    <property type="entry name" value="DNA-DIRECTED RNA POLYMERASE"/>
    <property type="match status" value="1"/>
</dbReference>
<dbReference type="PANTHER" id="PTHR19376:SF54">
    <property type="entry name" value="DNA-DIRECTED RNA POLYMERASE SUBUNIT BETA"/>
    <property type="match status" value="1"/>
</dbReference>
<dbReference type="Pfam" id="PF04997">
    <property type="entry name" value="RNA_pol_Rpb1_1"/>
    <property type="match status" value="1"/>
</dbReference>
<dbReference type="Pfam" id="PF00623">
    <property type="entry name" value="RNA_pol_Rpb1_2"/>
    <property type="match status" value="2"/>
</dbReference>
<dbReference type="Pfam" id="PF04983">
    <property type="entry name" value="RNA_pol_Rpb1_3"/>
    <property type="match status" value="1"/>
</dbReference>
<dbReference type="Pfam" id="PF05000">
    <property type="entry name" value="RNA_pol_Rpb1_4"/>
    <property type="match status" value="1"/>
</dbReference>
<dbReference type="Pfam" id="PF04998">
    <property type="entry name" value="RNA_pol_Rpb1_5"/>
    <property type="match status" value="1"/>
</dbReference>
<dbReference type="SMART" id="SM00663">
    <property type="entry name" value="RPOLA_N"/>
    <property type="match status" value="1"/>
</dbReference>
<dbReference type="SUPFAM" id="SSF64484">
    <property type="entry name" value="beta and beta-prime subunits of DNA dependent RNA-polymerase"/>
    <property type="match status" value="1"/>
</dbReference>
<keyword id="KW-0240">DNA-directed RNA polymerase</keyword>
<keyword id="KW-0460">Magnesium</keyword>
<keyword id="KW-0479">Metal-binding</keyword>
<keyword id="KW-0548">Nucleotidyltransferase</keyword>
<keyword id="KW-0804">Transcription</keyword>
<keyword id="KW-0808">Transferase</keyword>
<keyword id="KW-0862">Zinc</keyword>
<accession>Q5ZZS2</accession>
<evidence type="ECO:0000255" key="1">
    <source>
        <dbReference type="HAMAP-Rule" id="MF_01322"/>
    </source>
</evidence>
<evidence type="ECO:0000305" key="2"/>
<comment type="function">
    <text evidence="1">DNA-dependent RNA polymerase catalyzes the transcription of DNA into RNA using the four ribonucleoside triphosphates as substrates.</text>
</comment>
<comment type="catalytic activity">
    <reaction evidence="1">
        <text>RNA(n) + a ribonucleoside 5'-triphosphate = RNA(n+1) + diphosphate</text>
        <dbReference type="Rhea" id="RHEA:21248"/>
        <dbReference type="Rhea" id="RHEA-COMP:14527"/>
        <dbReference type="Rhea" id="RHEA-COMP:17342"/>
        <dbReference type="ChEBI" id="CHEBI:33019"/>
        <dbReference type="ChEBI" id="CHEBI:61557"/>
        <dbReference type="ChEBI" id="CHEBI:140395"/>
        <dbReference type="EC" id="2.7.7.6"/>
    </reaction>
</comment>
<comment type="cofactor">
    <cofactor evidence="1">
        <name>Mg(2+)</name>
        <dbReference type="ChEBI" id="CHEBI:18420"/>
    </cofactor>
    <text evidence="1">Binds 1 Mg(2+) ion per subunit.</text>
</comment>
<comment type="cofactor">
    <cofactor evidence="1">
        <name>Zn(2+)</name>
        <dbReference type="ChEBI" id="CHEBI:29105"/>
    </cofactor>
    <text evidence="2">Binds 1 Zn(2+) ion per subunit; 2 are expected compared to other organisms.</text>
</comment>
<comment type="subunit">
    <text evidence="1">The RNAP catalytic core consists of 2 alpha, 1 beta, 1 beta' and 1 omega subunit. When a sigma factor is associated with the core the holoenzyme is formed, which can initiate transcription.</text>
</comment>
<comment type="similarity">
    <text evidence="1">Belongs to the RNA polymerase beta' chain family.</text>
</comment>
<comment type="caution">
    <text evidence="2">The highly conserved N-terminal zinc-binding site of this subunit is not present in this sequence.</text>
</comment>
<proteinExistence type="inferred from homology"/>
<sequence>MNTKVSRQYAKISENSIQKISLALATPEDVLEWSRGEVHRPETINYKTFKPERGGLFDELIFGPLVDYKCSVCGRKYRKSNENQLCIATKECKIRGSRILSKMARRYSMGHIALNAPILHFWFFKIDHSIIAKLLGLKVFEGNSKVPTTITKTAIENLIYYKSHIVLETGGLKSLEQNKIIDISEAGLIYKNALIEIIEFYPPGSEEHNALAESISELADVTSSKIGREYGVDYYELNEIIEEFSSARIATGALAIEYLLDKIDLRAEKAAVEAELAGVQKQIYKNKKIILKNQKRDKLYKRLQVINAFINSGQDPKMMIIRNLPVIPADLRPLVQLDGSRHSTSDCNELYRRIIIRNNRLKRWKAAHAPVIIIQNEMRMLQEAVDALIDNQKKSTNQVTTKEGRPLKSISDALTGKKGRFRQNLLGKRVDYSGRSVIVVGPKLKMHQAGLPRKMAAVLFEPWIIRNLIQEKKVGSIKMARKMIEEENPIIWPHVAKVIQNKPIILNRAPTLHRLSIQAFEPVLVRAKAIQLHPLVTAGFNADFDGDQMAVHIPISPEAIRETQELMFADKNILGPKDGEPIVNPSQDMVLGLYYLSQEKAGAKGEGSFFSTYEAMLKAYEFRSVELHARVVLPFEQVKPFIAKTMRGHLISTVGKFILNNIFPANFPFIFDDNVDELELNYPSQIKKYVLPYGTNFREYIQNLKVNEPLNKKAIAKIVRQIFDTYDGLLAKEDIATVIDQLDFGNYQNRVLLYEKLRDYKKQKLPVPHLSKLSEFTIFEYSQLYKQLQQNGPVESYRVLEDHEKAELLEKIWFKYNNMVCSILDKIKDLGFHYSTLSGTSIAISDIKMAPKKHEFIKDGENYINKLNTFYAKGLITDDERYVLAIAKWTQIKNDIQEDLNQSIKDDNQNSLVMMMKSGARGNISNFVQLAGMRGLMANNVKALKVDAENERVVRSIVEVPVKSSFLEGLTSFEFYSSTHGARKGLTDTALNTAKSGYLTRRLVDVAQNIVVVAEDCFSDFGFVVKDIIDTKTNTIIVPLLERIEGRFLNKDVYDSRGIKLASAGSMVDLQTAKKIVAAGIKKVEIRSILSCHIKNSVCKKCYGKDLATNRLVSIGEAVGIIAAQSIGEPGTQLTMRTFHTGGVANVEDITGGFTRLIELIDSHEHPWGKPAKISPYYGIITKISDLAEKNAANKGFLITIEYKTSKNEKAEHIIRIEQSQKLRVKVGDKVIPGQKLVEGPIILKELLAVSDARTLQNYLLKEIQRIYRMQGISISDKYIEIIIRQMLSKVQIIENGDSNFFIGSIVDISDYQEVNGQLISQNKNPAFGNVIVKGAKQIPLLSNSFLAAASYQETSKILVHSVISSQIDKLEGLKENIIVGHKIPAGTNSNYEPKSKFDIRNPLSFFMKNNR</sequence>
<name>RPOC_MESH2</name>
<gene>
    <name evidence="1" type="primary">rpoC</name>
    <name type="ordered locus">mhp635</name>
</gene>
<reference key="1">
    <citation type="journal article" date="2004" name="J. Bacteriol.">
        <title>The genome sequence of Mycoplasma hyopneumoniae strain 232, the agent of swine mycoplasmosis.</title>
        <authorList>
            <person name="Minion F.C."/>
            <person name="Lefkowitz E.J."/>
            <person name="Madsen M.L."/>
            <person name="Cleary B.J."/>
            <person name="Swartzell S.M."/>
            <person name="Mahairas G.G."/>
        </authorList>
    </citation>
    <scope>NUCLEOTIDE SEQUENCE [LARGE SCALE GENOMIC DNA]</scope>
    <source>
        <strain>232</strain>
    </source>
</reference>